<accession>P51824</accession>
<sequence>MGLTISKLFSRLFAKKEMRILMVGLDAAGKTTILYKLKLGEIVTTIPTIGFNVETVEYKNISFTVWDVGGQDKIRPLWRHYFQNTQGLIFVVDSNDRDRVNEAREELMRMLAEDELRDAVLLVFANKQDLPNAMNAAEITDKLGLHSLRQRHWYIQSTCATSGEGLYEGLDWLSNQIRNQKANCNGTMLLWLLYPEK</sequence>
<keyword id="KW-0931">ER-Golgi transport</keyword>
<keyword id="KW-0333">Golgi apparatus</keyword>
<keyword id="KW-0342">GTP-binding</keyword>
<keyword id="KW-0378">Hydrolase</keyword>
<keyword id="KW-0449">Lipoprotein</keyword>
<keyword id="KW-0519">Myristate</keyword>
<keyword id="KW-0547">Nucleotide-binding</keyword>
<keyword id="KW-0653">Protein transport</keyword>
<keyword id="KW-1185">Reference proteome</keyword>
<keyword id="KW-0813">Transport</keyword>
<feature type="initiator methionine" description="Removed" evidence="3">
    <location>
        <position position="1"/>
    </location>
</feature>
<feature type="chain" id="PRO_0000207438" description="ADP-ribosylation factor 1">
    <location>
        <begin position="2"/>
        <end position="197"/>
    </location>
</feature>
<feature type="binding site" evidence="1">
    <location>
        <begin position="24"/>
        <end position="31"/>
    </location>
    <ligand>
        <name>GTP</name>
        <dbReference type="ChEBI" id="CHEBI:37565"/>
    </ligand>
</feature>
<feature type="binding site" evidence="1">
    <location>
        <begin position="67"/>
        <end position="71"/>
    </location>
    <ligand>
        <name>GTP</name>
        <dbReference type="ChEBI" id="CHEBI:37565"/>
    </ligand>
</feature>
<feature type="binding site" evidence="1">
    <location>
        <begin position="126"/>
        <end position="129"/>
    </location>
    <ligand>
        <name>GTP</name>
        <dbReference type="ChEBI" id="CHEBI:37565"/>
    </ligand>
</feature>
<feature type="lipid moiety-binding region" description="N-myristoyl glycine" evidence="3">
    <location>
        <position position="2"/>
    </location>
</feature>
<protein>
    <recommendedName>
        <fullName>ADP-ribosylation factor 1</fullName>
        <ecNumber evidence="2">3.6.5.2</ecNumber>
    </recommendedName>
</protein>
<evidence type="ECO:0000250" key="1"/>
<evidence type="ECO:0000250" key="2">
    <source>
        <dbReference type="UniProtKB" id="P84077"/>
    </source>
</evidence>
<evidence type="ECO:0000255" key="3"/>
<evidence type="ECO:0000305" key="4"/>
<dbReference type="EC" id="3.6.5.2" evidence="2"/>
<dbReference type="EMBL" id="X74461">
    <property type="protein sequence ID" value="CAA52468.1"/>
    <property type="molecule type" value="mRNA"/>
</dbReference>
<dbReference type="PIR" id="S36453">
    <property type="entry name" value="S36453"/>
</dbReference>
<dbReference type="SMR" id="P51824"/>
<dbReference type="STRING" id="4113.P51824"/>
<dbReference type="PaxDb" id="4113-PGSC0003DMT400035158"/>
<dbReference type="eggNOG" id="KOG0070">
    <property type="taxonomic scope" value="Eukaryota"/>
</dbReference>
<dbReference type="InParanoid" id="P51824"/>
<dbReference type="Proteomes" id="UP000011115">
    <property type="component" value="Unassembled WGS sequence"/>
</dbReference>
<dbReference type="ExpressionAtlas" id="P51824">
    <property type="expression patterns" value="baseline"/>
</dbReference>
<dbReference type="GO" id="GO:0005737">
    <property type="term" value="C:cytoplasm"/>
    <property type="evidence" value="ECO:0000318"/>
    <property type="project" value="GO_Central"/>
</dbReference>
<dbReference type="GO" id="GO:0005794">
    <property type="term" value="C:Golgi apparatus"/>
    <property type="evidence" value="ECO:0007669"/>
    <property type="project" value="UniProtKB-SubCell"/>
</dbReference>
<dbReference type="GO" id="GO:0005525">
    <property type="term" value="F:GTP binding"/>
    <property type="evidence" value="ECO:0000318"/>
    <property type="project" value="GO_Central"/>
</dbReference>
<dbReference type="GO" id="GO:0003924">
    <property type="term" value="F:GTPase activity"/>
    <property type="evidence" value="ECO:0007669"/>
    <property type="project" value="InterPro"/>
</dbReference>
<dbReference type="GO" id="GO:0006886">
    <property type="term" value="P:intracellular protein transport"/>
    <property type="evidence" value="ECO:0000318"/>
    <property type="project" value="GO_Central"/>
</dbReference>
<dbReference type="GO" id="GO:0016192">
    <property type="term" value="P:vesicle-mediated transport"/>
    <property type="evidence" value="ECO:0000318"/>
    <property type="project" value="GO_Central"/>
</dbReference>
<dbReference type="CDD" id="cd04150">
    <property type="entry name" value="Arf1_5_like"/>
    <property type="match status" value="1"/>
</dbReference>
<dbReference type="FunFam" id="3.40.50.300:FF:003500">
    <property type="entry name" value="ADP-ribosylation factor 1"/>
    <property type="match status" value="1"/>
</dbReference>
<dbReference type="Gene3D" id="3.40.50.300">
    <property type="entry name" value="P-loop containing nucleotide triphosphate hydrolases"/>
    <property type="match status" value="1"/>
</dbReference>
<dbReference type="InterPro" id="IPR045872">
    <property type="entry name" value="Arf1-5-like"/>
</dbReference>
<dbReference type="InterPro" id="IPR027417">
    <property type="entry name" value="P-loop_NTPase"/>
</dbReference>
<dbReference type="InterPro" id="IPR005225">
    <property type="entry name" value="Small_GTP-bd"/>
</dbReference>
<dbReference type="InterPro" id="IPR024156">
    <property type="entry name" value="Small_GTPase_ARF"/>
</dbReference>
<dbReference type="InterPro" id="IPR006689">
    <property type="entry name" value="Small_GTPase_ARF/SAR"/>
</dbReference>
<dbReference type="NCBIfam" id="TIGR00231">
    <property type="entry name" value="small_GTP"/>
    <property type="match status" value="1"/>
</dbReference>
<dbReference type="PANTHER" id="PTHR11711">
    <property type="entry name" value="ADP RIBOSYLATION FACTOR-RELATED"/>
    <property type="match status" value="1"/>
</dbReference>
<dbReference type="Pfam" id="PF00025">
    <property type="entry name" value="Arf"/>
    <property type="match status" value="1"/>
</dbReference>
<dbReference type="PRINTS" id="PR00328">
    <property type="entry name" value="SAR1GTPBP"/>
</dbReference>
<dbReference type="SMART" id="SM00177">
    <property type="entry name" value="ARF"/>
    <property type="match status" value="1"/>
</dbReference>
<dbReference type="SMART" id="SM00175">
    <property type="entry name" value="RAB"/>
    <property type="match status" value="1"/>
</dbReference>
<dbReference type="SMART" id="SM00178">
    <property type="entry name" value="SAR"/>
    <property type="match status" value="1"/>
</dbReference>
<dbReference type="SUPFAM" id="SSF52540">
    <property type="entry name" value="P-loop containing nucleoside triphosphate hydrolases"/>
    <property type="match status" value="1"/>
</dbReference>
<dbReference type="PROSITE" id="PS51417">
    <property type="entry name" value="ARF"/>
    <property type="match status" value="1"/>
</dbReference>
<organism>
    <name type="scientific">Solanum tuberosum</name>
    <name type="common">Potato</name>
    <dbReference type="NCBI Taxonomy" id="4113"/>
    <lineage>
        <taxon>Eukaryota</taxon>
        <taxon>Viridiplantae</taxon>
        <taxon>Streptophyta</taxon>
        <taxon>Embryophyta</taxon>
        <taxon>Tracheophyta</taxon>
        <taxon>Spermatophyta</taxon>
        <taxon>Magnoliopsida</taxon>
        <taxon>eudicotyledons</taxon>
        <taxon>Gunneridae</taxon>
        <taxon>Pentapetalae</taxon>
        <taxon>asterids</taxon>
        <taxon>lamiids</taxon>
        <taxon>Solanales</taxon>
        <taxon>Solanaceae</taxon>
        <taxon>Solanoideae</taxon>
        <taxon>Solaneae</taxon>
        <taxon>Solanum</taxon>
    </lineage>
</organism>
<reference key="1">
    <citation type="journal article" date="1994" name="Plant Cell Rep.">
        <title>Cloning and expression analysis of an ADP-ribosylation factor from Solanum tuberosum L.</title>
        <authorList>
            <person name="Szopa J."/>
            <person name="Mueller-Roeber B."/>
        </authorList>
    </citation>
    <scope>NUCLEOTIDE SEQUENCE [MRNA]</scope>
    <source>
        <strain>cv. Desiree</strain>
        <tissue>Leaf</tissue>
    </source>
</reference>
<proteinExistence type="evidence at transcript level"/>
<name>ARF1_SOLTU</name>
<comment type="function">
    <text>GTP-binding protein involved in protein trafficking; may modulate vesicle budding and uncoating within the Golgi apparatus.</text>
</comment>
<comment type="catalytic activity">
    <reaction evidence="2">
        <text>GTP + H2O = GDP + phosphate + H(+)</text>
        <dbReference type="Rhea" id="RHEA:19669"/>
        <dbReference type="ChEBI" id="CHEBI:15377"/>
        <dbReference type="ChEBI" id="CHEBI:15378"/>
        <dbReference type="ChEBI" id="CHEBI:37565"/>
        <dbReference type="ChEBI" id="CHEBI:43474"/>
        <dbReference type="ChEBI" id="CHEBI:58189"/>
        <dbReference type="EC" id="3.6.5.2"/>
    </reaction>
</comment>
<comment type="subcellular location">
    <subcellularLocation>
        <location>Golgi apparatus</location>
    </subcellularLocation>
</comment>
<comment type="similarity">
    <text evidence="4">Belongs to the small GTPase superfamily. Arf family.</text>
</comment>